<comment type="function">
    <text evidence="1">Participates in both the initiation and recycling phases of transcription. In the presence of the delta subunit, RNAP displays an increased specificity of transcription, a decreased affinity for nucleic acids, and an increased efficiency of RNA synthesis because of enhanced recycling.</text>
</comment>
<comment type="subunit">
    <text evidence="1">RNAP is composed of a core of 2 alpha, a beta and a beta' subunits. The core is associated with a delta subunit and one of several sigma factors.</text>
</comment>
<comment type="similarity">
    <text evidence="1">Belongs to the RpoE family.</text>
</comment>
<evidence type="ECO:0000255" key="1">
    <source>
        <dbReference type="HAMAP-Rule" id="MF_00357"/>
    </source>
</evidence>
<evidence type="ECO:0000255" key="2">
    <source>
        <dbReference type="PROSITE-ProRule" id="PRU01261"/>
    </source>
</evidence>
<evidence type="ECO:0000256" key="3">
    <source>
        <dbReference type="SAM" id="MobiDB-lite"/>
    </source>
</evidence>
<reference key="1">
    <citation type="journal article" date="2002" name="Nucleic Acids Res.">
        <title>Genome sequence of Oceanobacillus iheyensis isolated from the Iheya Ridge and its unexpected adaptive capabilities to extreme environments.</title>
        <authorList>
            <person name="Takami H."/>
            <person name="Takaki Y."/>
            <person name="Uchiyama I."/>
        </authorList>
    </citation>
    <scope>NUCLEOTIDE SEQUENCE [LARGE SCALE GENOMIC DNA]</scope>
    <source>
        <strain>DSM 14371 / CIP 107618 / JCM 11309 / KCTC 3954 / HTE831</strain>
    </source>
</reference>
<proteinExistence type="inferred from homology"/>
<organism>
    <name type="scientific">Oceanobacillus iheyensis (strain DSM 14371 / CIP 107618 / JCM 11309 / KCTC 3954 / HTE831)</name>
    <dbReference type="NCBI Taxonomy" id="221109"/>
    <lineage>
        <taxon>Bacteria</taxon>
        <taxon>Bacillati</taxon>
        <taxon>Bacillota</taxon>
        <taxon>Bacilli</taxon>
        <taxon>Bacillales</taxon>
        <taxon>Bacillaceae</taxon>
        <taxon>Oceanobacillus</taxon>
    </lineage>
</organism>
<name>RPOE_OCEIH</name>
<accession>Q8EM52</accession>
<feature type="chain" id="PRO_0000303134" description="Probable DNA-directed RNA polymerase subunit delta">
    <location>
        <begin position="1"/>
        <end position="173"/>
    </location>
</feature>
<feature type="domain" description="HTH HARE-type" evidence="2">
    <location>
        <begin position="14"/>
        <end position="81"/>
    </location>
</feature>
<feature type="region of interest" description="Disordered" evidence="3">
    <location>
        <begin position="86"/>
        <end position="173"/>
    </location>
</feature>
<feature type="compositionally biased region" description="Acidic residues" evidence="3">
    <location>
        <begin position="109"/>
        <end position="173"/>
    </location>
</feature>
<protein>
    <recommendedName>
        <fullName evidence="1">Probable DNA-directed RNA polymerase subunit delta</fullName>
    </recommendedName>
    <alternativeName>
        <fullName evidence="1">RNAP delta factor</fullName>
    </alternativeName>
</protein>
<sequence length="173" mass="20206">MSLQQLTHDEIDHLSMIELGVKILKEENKAMNYKVIFNKIAELKDFTDEQKQNMMAQFYTDMNVDGRFLTLGSGMWGLKRWYPVEQAEEEITEEPKKKTKKKKKKAEVIDDVDDDLDVTDDEIDDIVSDLGDDLDDDDFEDDLDEDLEDLEDEVDELEADEDVEDENDDDNTR</sequence>
<gene>
    <name evidence="1" type="primary">rpoE</name>
    <name type="ordered locus">OB3008</name>
</gene>
<dbReference type="EMBL" id="BA000028">
    <property type="protein sequence ID" value="BAC14964.1"/>
    <property type="molecule type" value="Genomic_DNA"/>
</dbReference>
<dbReference type="RefSeq" id="WP_011067404.1">
    <property type="nucleotide sequence ID" value="NC_004193.1"/>
</dbReference>
<dbReference type="SMR" id="Q8EM52"/>
<dbReference type="STRING" id="221109.gene:10735260"/>
<dbReference type="KEGG" id="oih:OB3008"/>
<dbReference type="eggNOG" id="COG3343">
    <property type="taxonomic scope" value="Bacteria"/>
</dbReference>
<dbReference type="HOGENOM" id="CLU_116648_1_0_9"/>
<dbReference type="OrthoDB" id="401223at2"/>
<dbReference type="Proteomes" id="UP000000822">
    <property type="component" value="Chromosome"/>
</dbReference>
<dbReference type="GO" id="GO:0000428">
    <property type="term" value="C:DNA-directed RNA polymerase complex"/>
    <property type="evidence" value="ECO:0007669"/>
    <property type="project" value="UniProtKB-KW"/>
</dbReference>
<dbReference type="GO" id="GO:0003899">
    <property type="term" value="F:DNA-directed RNA polymerase activity"/>
    <property type="evidence" value="ECO:0007669"/>
    <property type="project" value="UniProtKB-UniRule"/>
</dbReference>
<dbReference type="GO" id="GO:0006351">
    <property type="term" value="P:DNA-templated transcription"/>
    <property type="evidence" value="ECO:0007669"/>
    <property type="project" value="InterPro"/>
</dbReference>
<dbReference type="GO" id="GO:0006355">
    <property type="term" value="P:regulation of DNA-templated transcription"/>
    <property type="evidence" value="ECO:0007669"/>
    <property type="project" value="UniProtKB-UniRule"/>
</dbReference>
<dbReference type="Gene3D" id="1.10.10.1250">
    <property type="entry name" value="RNA polymerase, subunit delta, N-terminal domain"/>
    <property type="match status" value="1"/>
</dbReference>
<dbReference type="HAMAP" id="MF_00357">
    <property type="entry name" value="RNApol_bact_RpoE"/>
    <property type="match status" value="1"/>
</dbReference>
<dbReference type="InterPro" id="IPR007759">
    <property type="entry name" value="Asxl_HARE-HTH"/>
</dbReference>
<dbReference type="InterPro" id="IPR038087">
    <property type="entry name" value="RNAP_delta_N_dom_sf"/>
</dbReference>
<dbReference type="InterPro" id="IPR029757">
    <property type="entry name" value="RpoE"/>
</dbReference>
<dbReference type="NCBIfam" id="TIGR04567">
    <property type="entry name" value="RNAP_delt_lowGC"/>
    <property type="match status" value="1"/>
</dbReference>
<dbReference type="Pfam" id="PF05066">
    <property type="entry name" value="HARE-HTH"/>
    <property type="match status" value="1"/>
</dbReference>
<dbReference type="PROSITE" id="PS51913">
    <property type="entry name" value="HTH_HARE"/>
    <property type="match status" value="1"/>
</dbReference>
<keyword id="KW-0240">DNA-directed RNA polymerase</keyword>
<keyword id="KW-0548">Nucleotidyltransferase</keyword>
<keyword id="KW-1185">Reference proteome</keyword>
<keyword id="KW-0804">Transcription</keyword>
<keyword id="KW-0808">Transferase</keyword>